<comment type="function">
    <text evidence="1">Involved in mRNA export coupled transcription activation by association with both the TREX-2 and the SAGA complexes. At the promoters, SAGA is required for recruitment of the basal transcription machinery. It influences RNA polymerase II transcriptional activity through different activities such as TBP interaction and promoter selectivity, interaction with transcription activators, and chromatin modification through histone acetylation and deubiquitination. Within the SAGA complex, participates in a subcomplex required for deubiquitination of H2B and for the maintenance of steady-state H3 methylation levels. The TREX-2 complex functions in docking export-competent ribonucleoprotein particles (mRNPs) to the nuclear entrance of the nuclear pore complex (nuclear basket). TREX-2 participates in mRNA export and accurate chromatin positioning in the nucleus by tethering genes to the nuclear periphery. May also be involved in cytoplasmic mRNA decay by interaction with components of P-bodies (By similarity).</text>
</comment>
<comment type="subunit">
    <text evidence="2">Component of the nuclear pore complex (NPC)-associated TREX-2 complex (transcription and export complex 2), composed of at least SUS1, SAC3, THP1, SEM1, and CDC31. TREX-2 contains 2 SUS1 chains. The TREX-2 complex interacts with the nucleoporin NUP1. Component of the 1.8 MDa SAGA transcription coactivator-HAT complex. SAGA is built of 5 distinct domains with specialized functions. Within the SAGA complex, SUS1, SGF11, SGF73 and UBP8 form an additional subcomplex of SAGA called the DUB module (deubiquitination module). Interacts directly with THP1, SAC3, SGF11, and with the RNA polymerase II.</text>
</comment>
<comment type="subcellular location">
    <subcellularLocation>
        <location evidence="2">Nucleus</location>
        <location evidence="2">Nucleoplasm</location>
    </subcellularLocation>
    <subcellularLocation>
        <location evidence="2">Cytoplasm</location>
        <location evidence="2">P-body</location>
    </subcellularLocation>
</comment>
<comment type="similarity">
    <text evidence="2">Belongs to the ENY2 family.</text>
</comment>
<comment type="sequence caution" evidence="3">
    <conflict type="erroneous gene model prediction">
        <sequence resource="EMBL-CDS" id="EAL21432"/>
    </conflict>
</comment>
<gene>
    <name evidence="2" type="primary">SUS1</name>
    <name type="ordered locus">CNBD1270</name>
</gene>
<organism>
    <name type="scientific">Cryptococcus neoformans var. neoformans serotype D (strain B-3501A)</name>
    <name type="common">Filobasidiella neoformans</name>
    <dbReference type="NCBI Taxonomy" id="283643"/>
    <lineage>
        <taxon>Eukaryota</taxon>
        <taxon>Fungi</taxon>
        <taxon>Dikarya</taxon>
        <taxon>Basidiomycota</taxon>
        <taxon>Agaricomycotina</taxon>
        <taxon>Tremellomycetes</taxon>
        <taxon>Tremellales</taxon>
        <taxon>Cryptococcaceae</taxon>
        <taxon>Cryptococcus</taxon>
        <taxon>Cryptococcus neoformans species complex</taxon>
    </lineage>
</organism>
<proteinExistence type="inferred from homology"/>
<keyword id="KW-0010">Activator</keyword>
<keyword id="KW-0156">Chromatin regulator</keyword>
<keyword id="KW-0963">Cytoplasm</keyword>
<keyword id="KW-0509">mRNA transport</keyword>
<keyword id="KW-0539">Nucleus</keyword>
<keyword id="KW-0653">Protein transport</keyword>
<keyword id="KW-0804">Transcription</keyword>
<keyword id="KW-0805">Transcription regulation</keyword>
<keyword id="KW-0811">Translocation</keyword>
<keyword id="KW-0813">Transport</keyword>
<reference key="1">
    <citation type="journal article" date="2005" name="Science">
        <title>The genome of the basidiomycetous yeast and human pathogen Cryptococcus neoformans.</title>
        <authorList>
            <person name="Loftus B.J."/>
            <person name="Fung E."/>
            <person name="Roncaglia P."/>
            <person name="Rowley D."/>
            <person name="Amedeo P."/>
            <person name="Bruno D."/>
            <person name="Vamathevan J."/>
            <person name="Miranda M."/>
            <person name="Anderson I.J."/>
            <person name="Fraser J.A."/>
            <person name="Allen J.E."/>
            <person name="Bosdet I.E."/>
            <person name="Brent M.R."/>
            <person name="Chiu R."/>
            <person name="Doering T.L."/>
            <person name="Donlin M.J."/>
            <person name="D'Souza C.A."/>
            <person name="Fox D.S."/>
            <person name="Grinberg V."/>
            <person name="Fu J."/>
            <person name="Fukushima M."/>
            <person name="Haas B.J."/>
            <person name="Huang J.C."/>
            <person name="Janbon G."/>
            <person name="Jones S.J.M."/>
            <person name="Koo H.L."/>
            <person name="Krzywinski M.I."/>
            <person name="Kwon-Chung K.J."/>
            <person name="Lengeler K.B."/>
            <person name="Maiti R."/>
            <person name="Marra M.A."/>
            <person name="Marra R.E."/>
            <person name="Mathewson C.A."/>
            <person name="Mitchell T.G."/>
            <person name="Pertea M."/>
            <person name="Riggs F.R."/>
            <person name="Salzberg S.L."/>
            <person name="Schein J.E."/>
            <person name="Shvartsbeyn A."/>
            <person name="Shin H."/>
            <person name="Shumway M."/>
            <person name="Specht C.A."/>
            <person name="Suh B.B."/>
            <person name="Tenney A."/>
            <person name="Utterback T.R."/>
            <person name="Wickes B.L."/>
            <person name="Wortman J.R."/>
            <person name="Wye N.H."/>
            <person name="Kronstad J.W."/>
            <person name="Lodge J.K."/>
            <person name="Heitman J."/>
            <person name="Davis R.W."/>
            <person name="Fraser C.M."/>
            <person name="Hyman R.W."/>
        </authorList>
    </citation>
    <scope>NUCLEOTIDE SEQUENCE [LARGE SCALE GENOMIC DNA]</scope>
    <source>
        <strain>B-3501A</strain>
    </source>
</reference>
<protein>
    <recommendedName>
        <fullName evidence="2">Transcription and mRNA export factor SUS1</fullName>
    </recommendedName>
</protein>
<evidence type="ECO:0000250" key="1"/>
<evidence type="ECO:0000255" key="2">
    <source>
        <dbReference type="HAMAP-Rule" id="MF_03046"/>
    </source>
</evidence>
<evidence type="ECO:0000305" key="3"/>
<feature type="chain" id="PRO_0000410083" description="Transcription and mRNA export factor SUS1">
    <location>
        <begin position="1"/>
        <end position="100"/>
    </location>
</feature>
<dbReference type="EMBL" id="AAEY01000019">
    <property type="protein sequence ID" value="EAL21432.1"/>
    <property type="status" value="ALT_SEQ"/>
    <property type="molecule type" value="Genomic_DNA"/>
</dbReference>
<dbReference type="RefSeq" id="XP_776079.1">
    <property type="nucleotide sequence ID" value="XM_770986.1"/>
</dbReference>
<dbReference type="SMR" id="P0CS73"/>
<dbReference type="EnsemblFungi" id="AAW42756">
    <property type="protein sequence ID" value="AAW42756"/>
    <property type="gene ID" value="CND05070"/>
</dbReference>
<dbReference type="GeneID" id="4935516"/>
<dbReference type="KEGG" id="cnb:CNBD1270"/>
<dbReference type="HOGENOM" id="CLU_134052_2_0_1"/>
<dbReference type="OrthoDB" id="3223at5206"/>
<dbReference type="GO" id="GO:0071819">
    <property type="term" value="C:DUBm complex"/>
    <property type="evidence" value="ECO:0007669"/>
    <property type="project" value="UniProtKB-UniRule"/>
</dbReference>
<dbReference type="GO" id="GO:0005643">
    <property type="term" value="C:nuclear pore"/>
    <property type="evidence" value="ECO:0007669"/>
    <property type="project" value="UniProtKB-UniRule"/>
</dbReference>
<dbReference type="GO" id="GO:0005654">
    <property type="term" value="C:nucleoplasm"/>
    <property type="evidence" value="ECO:0007669"/>
    <property type="project" value="UniProtKB-SubCell"/>
</dbReference>
<dbReference type="GO" id="GO:0000932">
    <property type="term" value="C:P-body"/>
    <property type="evidence" value="ECO:0007669"/>
    <property type="project" value="UniProtKB-SubCell"/>
</dbReference>
<dbReference type="GO" id="GO:0000124">
    <property type="term" value="C:SAGA complex"/>
    <property type="evidence" value="ECO:0007669"/>
    <property type="project" value="UniProtKB-UniRule"/>
</dbReference>
<dbReference type="GO" id="GO:0070390">
    <property type="term" value="C:transcription export complex 2"/>
    <property type="evidence" value="ECO:0007669"/>
    <property type="project" value="UniProtKB-UniRule"/>
</dbReference>
<dbReference type="GO" id="GO:0003713">
    <property type="term" value="F:transcription coactivator activity"/>
    <property type="evidence" value="ECO:0007669"/>
    <property type="project" value="UniProtKB-UniRule"/>
</dbReference>
<dbReference type="GO" id="GO:0006325">
    <property type="term" value="P:chromatin organization"/>
    <property type="evidence" value="ECO:0007669"/>
    <property type="project" value="UniProtKB-KW"/>
</dbReference>
<dbReference type="GO" id="GO:0006406">
    <property type="term" value="P:mRNA export from nucleus"/>
    <property type="evidence" value="ECO:0007669"/>
    <property type="project" value="UniProtKB-UniRule"/>
</dbReference>
<dbReference type="GO" id="GO:0015031">
    <property type="term" value="P:protein transport"/>
    <property type="evidence" value="ECO:0007669"/>
    <property type="project" value="UniProtKB-KW"/>
</dbReference>
<dbReference type="GO" id="GO:0006368">
    <property type="term" value="P:transcription elongation by RNA polymerase II"/>
    <property type="evidence" value="ECO:0007669"/>
    <property type="project" value="UniProtKB-UniRule"/>
</dbReference>
<dbReference type="FunFam" id="1.10.246.140:FF:000003">
    <property type="entry name" value="Transcription and mRNA export factor SUS1"/>
    <property type="match status" value="1"/>
</dbReference>
<dbReference type="Gene3D" id="1.10.246.140">
    <property type="match status" value="1"/>
</dbReference>
<dbReference type="HAMAP" id="MF_03046">
    <property type="entry name" value="ENY2_Sus1"/>
    <property type="match status" value="1"/>
</dbReference>
<dbReference type="InterPro" id="IPR018783">
    <property type="entry name" value="TF_ENY2"/>
</dbReference>
<dbReference type="InterPro" id="IPR038212">
    <property type="entry name" value="TF_EnY2_sf"/>
</dbReference>
<dbReference type="PANTHER" id="PTHR12514">
    <property type="entry name" value="ENHANCER OF YELLOW 2 TRANSCRIPTION FACTOR"/>
    <property type="match status" value="1"/>
</dbReference>
<dbReference type="Pfam" id="PF10163">
    <property type="entry name" value="EnY2"/>
    <property type="match status" value="1"/>
</dbReference>
<accession>P0CS73</accession>
<accession>Q55UI0</accession>
<accession>Q5KHW5</accession>
<sequence length="100" mass="11357">MSHVDVTVDEATINAIRQRMLETGDWERIQKLLRAHLEESGWVDDLKDLAKEKARAQDVPNLENLVKQISESAAGMVSDNVKRDVMLEIESVLDREVDQA</sequence>
<name>SUS1_CRYNB</name>